<accession>Q31C12</accession>
<proteinExistence type="inferred from homology"/>
<evidence type="ECO:0000255" key="1">
    <source>
        <dbReference type="HAMAP-Rule" id="MF_01220"/>
    </source>
</evidence>
<sequence length="234" mass="25129">MTYKRVLLKLSGEALMGEKPYGIDPAIVQSIAEDVSKVVGNNIQLAIVVGGGNIFRGLKGSADGMDRATADYVGMLATVMNAISLQDGLERVGVATRVQTAIEMQEIAEPYIRRRAMRHLEKGRVVVFGGGCGNPFFTTDTTAALRAAEINAEVVMKATKVDGVYNCDPNKFQDAKKYTNLSYQQVLSDEIAVMDSTAIALCKDNNIPIMVFDIFKKGNISKAVAGEAIGSLIS</sequence>
<gene>
    <name evidence="1" type="primary">pyrH</name>
    <name type="ordered locus">PMT9312_0522</name>
</gene>
<protein>
    <recommendedName>
        <fullName evidence="1">Uridylate kinase</fullName>
        <shortName evidence="1">UK</shortName>
        <ecNumber evidence="1">2.7.4.22</ecNumber>
    </recommendedName>
    <alternativeName>
        <fullName evidence="1">Uridine monophosphate kinase</fullName>
        <shortName evidence="1">UMP kinase</shortName>
        <shortName evidence="1">UMPK</shortName>
    </alternativeName>
</protein>
<name>PYRH_PROM9</name>
<reference key="1">
    <citation type="journal article" date="2006" name="Science">
        <title>Genomic islands and the ecology and evolution of Prochlorococcus.</title>
        <authorList>
            <person name="Coleman M.L."/>
            <person name="Sullivan M.B."/>
            <person name="Martiny A.C."/>
            <person name="Steglich C."/>
            <person name="Barry K."/>
            <person name="Delong E.F."/>
            <person name="Chisholm S.W."/>
        </authorList>
    </citation>
    <scope>NUCLEOTIDE SEQUENCE [LARGE SCALE GENOMIC DNA]</scope>
    <source>
        <strain>MIT 9312</strain>
    </source>
</reference>
<comment type="function">
    <text evidence="1">Catalyzes the reversible phosphorylation of UMP to UDP.</text>
</comment>
<comment type="catalytic activity">
    <reaction evidence="1">
        <text>UMP + ATP = UDP + ADP</text>
        <dbReference type="Rhea" id="RHEA:24400"/>
        <dbReference type="ChEBI" id="CHEBI:30616"/>
        <dbReference type="ChEBI" id="CHEBI:57865"/>
        <dbReference type="ChEBI" id="CHEBI:58223"/>
        <dbReference type="ChEBI" id="CHEBI:456216"/>
        <dbReference type="EC" id="2.7.4.22"/>
    </reaction>
</comment>
<comment type="activity regulation">
    <text evidence="1">Inhibited by UTP.</text>
</comment>
<comment type="pathway">
    <text evidence="1">Pyrimidine metabolism; CTP biosynthesis via de novo pathway; UDP from UMP (UMPK route): step 1/1.</text>
</comment>
<comment type="subunit">
    <text evidence="1">Homohexamer.</text>
</comment>
<comment type="subcellular location">
    <subcellularLocation>
        <location evidence="1">Cytoplasm</location>
    </subcellularLocation>
</comment>
<comment type="similarity">
    <text evidence="1">Belongs to the UMP kinase family.</text>
</comment>
<keyword id="KW-0067">ATP-binding</keyword>
<keyword id="KW-0963">Cytoplasm</keyword>
<keyword id="KW-0418">Kinase</keyword>
<keyword id="KW-0547">Nucleotide-binding</keyword>
<keyword id="KW-0665">Pyrimidine biosynthesis</keyword>
<keyword id="KW-0808">Transferase</keyword>
<dbReference type="EC" id="2.7.4.22" evidence="1"/>
<dbReference type="EMBL" id="CP000111">
    <property type="protein sequence ID" value="ABB49583.1"/>
    <property type="molecule type" value="Genomic_DNA"/>
</dbReference>
<dbReference type="RefSeq" id="WP_011376081.1">
    <property type="nucleotide sequence ID" value="NC_007577.1"/>
</dbReference>
<dbReference type="SMR" id="Q31C12"/>
<dbReference type="STRING" id="74546.PMT9312_0522"/>
<dbReference type="KEGG" id="pmi:PMT9312_0522"/>
<dbReference type="eggNOG" id="COG0528">
    <property type="taxonomic scope" value="Bacteria"/>
</dbReference>
<dbReference type="HOGENOM" id="CLU_033861_0_0_3"/>
<dbReference type="OrthoDB" id="9807458at2"/>
<dbReference type="UniPathway" id="UPA00159">
    <property type="reaction ID" value="UER00275"/>
</dbReference>
<dbReference type="Proteomes" id="UP000002715">
    <property type="component" value="Chromosome"/>
</dbReference>
<dbReference type="GO" id="GO:0005737">
    <property type="term" value="C:cytoplasm"/>
    <property type="evidence" value="ECO:0007669"/>
    <property type="project" value="UniProtKB-SubCell"/>
</dbReference>
<dbReference type="GO" id="GO:0005524">
    <property type="term" value="F:ATP binding"/>
    <property type="evidence" value="ECO:0007669"/>
    <property type="project" value="UniProtKB-KW"/>
</dbReference>
<dbReference type="GO" id="GO:0033862">
    <property type="term" value="F:UMP kinase activity"/>
    <property type="evidence" value="ECO:0007669"/>
    <property type="project" value="UniProtKB-EC"/>
</dbReference>
<dbReference type="GO" id="GO:0044210">
    <property type="term" value="P:'de novo' CTP biosynthetic process"/>
    <property type="evidence" value="ECO:0007669"/>
    <property type="project" value="UniProtKB-UniRule"/>
</dbReference>
<dbReference type="GO" id="GO:0006225">
    <property type="term" value="P:UDP biosynthetic process"/>
    <property type="evidence" value="ECO:0007669"/>
    <property type="project" value="TreeGrafter"/>
</dbReference>
<dbReference type="CDD" id="cd04254">
    <property type="entry name" value="AAK_UMPK-PyrH-Ec"/>
    <property type="match status" value="1"/>
</dbReference>
<dbReference type="FunFam" id="3.40.1160.10:FF:000001">
    <property type="entry name" value="Uridylate kinase"/>
    <property type="match status" value="1"/>
</dbReference>
<dbReference type="Gene3D" id="3.40.1160.10">
    <property type="entry name" value="Acetylglutamate kinase-like"/>
    <property type="match status" value="1"/>
</dbReference>
<dbReference type="HAMAP" id="MF_01220_B">
    <property type="entry name" value="PyrH_B"/>
    <property type="match status" value="1"/>
</dbReference>
<dbReference type="InterPro" id="IPR036393">
    <property type="entry name" value="AceGlu_kinase-like_sf"/>
</dbReference>
<dbReference type="InterPro" id="IPR001048">
    <property type="entry name" value="Asp/Glu/Uridylate_kinase"/>
</dbReference>
<dbReference type="InterPro" id="IPR011817">
    <property type="entry name" value="Uridylate_kinase"/>
</dbReference>
<dbReference type="InterPro" id="IPR015963">
    <property type="entry name" value="Uridylate_kinase_bac"/>
</dbReference>
<dbReference type="NCBIfam" id="TIGR02075">
    <property type="entry name" value="pyrH_bact"/>
    <property type="match status" value="1"/>
</dbReference>
<dbReference type="PANTHER" id="PTHR42833">
    <property type="entry name" value="URIDYLATE KINASE"/>
    <property type="match status" value="1"/>
</dbReference>
<dbReference type="PANTHER" id="PTHR42833:SF4">
    <property type="entry name" value="URIDYLATE KINASE PUMPKIN, CHLOROPLASTIC"/>
    <property type="match status" value="1"/>
</dbReference>
<dbReference type="Pfam" id="PF00696">
    <property type="entry name" value="AA_kinase"/>
    <property type="match status" value="1"/>
</dbReference>
<dbReference type="PIRSF" id="PIRSF005650">
    <property type="entry name" value="Uridylate_kin"/>
    <property type="match status" value="1"/>
</dbReference>
<dbReference type="SUPFAM" id="SSF53633">
    <property type="entry name" value="Carbamate kinase-like"/>
    <property type="match status" value="1"/>
</dbReference>
<organism>
    <name type="scientific">Prochlorococcus marinus (strain MIT 9312)</name>
    <dbReference type="NCBI Taxonomy" id="74546"/>
    <lineage>
        <taxon>Bacteria</taxon>
        <taxon>Bacillati</taxon>
        <taxon>Cyanobacteriota</taxon>
        <taxon>Cyanophyceae</taxon>
        <taxon>Synechococcales</taxon>
        <taxon>Prochlorococcaceae</taxon>
        <taxon>Prochlorococcus</taxon>
    </lineage>
</organism>
<feature type="chain" id="PRO_0000323921" description="Uridylate kinase">
    <location>
        <begin position="1"/>
        <end position="234"/>
    </location>
</feature>
<feature type="binding site" evidence="1">
    <location>
        <begin position="9"/>
        <end position="12"/>
    </location>
    <ligand>
        <name>ATP</name>
        <dbReference type="ChEBI" id="CHEBI:30616"/>
    </ligand>
</feature>
<feature type="binding site" evidence="1">
    <location>
        <position position="51"/>
    </location>
    <ligand>
        <name>UMP</name>
        <dbReference type="ChEBI" id="CHEBI:57865"/>
    </ligand>
</feature>
<feature type="binding site" evidence="1">
    <location>
        <position position="52"/>
    </location>
    <ligand>
        <name>ATP</name>
        <dbReference type="ChEBI" id="CHEBI:30616"/>
    </ligand>
</feature>
<feature type="binding site" evidence="1">
    <location>
        <position position="56"/>
    </location>
    <ligand>
        <name>ATP</name>
        <dbReference type="ChEBI" id="CHEBI:30616"/>
    </ligand>
</feature>
<feature type="binding site" evidence="1">
    <location>
        <position position="71"/>
    </location>
    <ligand>
        <name>UMP</name>
        <dbReference type="ChEBI" id="CHEBI:57865"/>
    </ligand>
</feature>
<feature type="binding site" evidence="1">
    <location>
        <begin position="132"/>
        <end position="139"/>
    </location>
    <ligand>
        <name>UMP</name>
        <dbReference type="ChEBI" id="CHEBI:57865"/>
    </ligand>
</feature>
<feature type="binding site" evidence="1">
    <location>
        <position position="159"/>
    </location>
    <ligand>
        <name>ATP</name>
        <dbReference type="ChEBI" id="CHEBI:30616"/>
    </ligand>
</feature>
<feature type="binding site" evidence="1">
    <location>
        <position position="165"/>
    </location>
    <ligand>
        <name>ATP</name>
        <dbReference type="ChEBI" id="CHEBI:30616"/>
    </ligand>
</feature>
<feature type="binding site" evidence="1">
    <location>
        <position position="168"/>
    </location>
    <ligand>
        <name>ATP</name>
        <dbReference type="ChEBI" id="CHEBI:30616"/>
    </ligand>
</feature>